<organism>
    <name type="scientific">Saccharomyces cerevisiae (strain ATCC 204508 / S288c)</name>
    <name type="common">Baker's yeast</name>
    <dbReference type="NCBI Taxonomy" id="559292"/>
    <lineage>
        <taxon>Eukaryota</taxon>
        <taxon>Fungi</taxon>
        <taxon>Dikarya</taxon>
        <taxon>Ascomycota</taxon>
        <taxon>Saccharomycotina</taxon>
        <taxon>Saccharomycetes</taxon>
        <taxon>Saccharomycetales</taxon>
        <taxon>Saccharomycetaceae</taxon>
        <taxon>Saccharomyces</taxon>
    </lineage>
</organism>
<dbReference type="EC" id="2.1.1.229"/>
<dbReference type="EMBL" id="Z49810">
    <property type="protein sequence ID" value="CAA89938.1"/>
    <property type="molecule type" value="Genomic_DNA"/>
</dbReference>
<dbReference type="EMBL" id="BK006946">
    <property type="protein sequence ID" value="DAA09884.1"/>
    <property type="molecule type" value="Genomic_DNA"/>
</dbReference>
<dbReference type="PIR" id="S55105">
    <property type="entry name" value="S55105"/>
</dbReference>
<dbReference type="RefSeq" id="NP_013698.1">
    <property type="nucleotide sequence ID" value="NM_001182372.1"/>
</dbReference>
<dbReference type="SMR" id="P49957"/>
<dbReference type="BioGRID" id="35155">
    <property type="interactions" value="116"/>
</dbReference>
<dbReference type="ComplexPortal" id="CPX-1052">
    <property type="entry name" value="TRM9-TRM112 methyltransferase complex"/>
</dbReference>
<dbReference type="DIP" id="DIP-4549N"/>
<dbReference type="FunCoup" id="P49957">
    <property type="interactions" value="62"/>
</dbReference>
<dbReference type="IntAct" id="P49957">
    <property type="interactions" value="2"/>
</dbReference>
<dbReference type="MINT" id="P49957"/>
<dbReference type="STRING" id="4932.YML014W"/>
<dbReference type="iPTMnet" id="P49957"/>
<dbReference type="PaxDb" id="4932-YML014W"/>
<dbReference type="PeptideAtlas" id="P49957"/>
<dbReference type="EnsemblFungi" id="YML014W_mRNA">
    <property type="protein sequence ID" value="YML014W"/>
    <property type="gene ID" value="YML014W"/>
</dbReference>
<dbReference type="GeneID" id="854994"/>
<dbReference type="KEGG" id="sce:YML014W"/>
<dbReference type="AGR" id="SGD:S000004476"/>
<dbReference type="SGD" id="S000004476">
    <property type="gene designation" value="TRM9"/>
</dbReference>
<dbReference type="VEuPathDB" id="FungiDB:YML014W"/>
<dbReference type="eggNOG" id="KOG1331">
    <property type="taxonomic scope" value="Eukaryota"/>
</dbReference>
<dbReference type="GeneTree" id="ENSGT00940000158563"/>
<dbReference type="HOGENOM" id="CLU_029501_2_0_1"/>
<dbReference type="InParanoid" id="P49957"/>
<dbReference type="OMA" id="VHEVYQQ"/>
<dbReference type="OrthoDB" id="271595at2759"/>
<dbReference type="BioCyc" id="MetaCyc:G3O-32618-MONOMER"/>
<dbReference type="BioCyc" id="YEAST:G3O-32618-MONOMER"/>
<dbReference type="BRENDA" id="2.1.1.229">
    <property type="organism ID" value="984"/>
</dbReference>
<dbReference type="BioGRID-ORCS" id="854994">
    <property type="hits" value="2 hits in 10 CRISPR screens"/>
</dbReference>
<dbReference type="PRO" id="PR:P49957"/>
<dbReference type="Proteomes" id="UP000002311">
    <property type="component" value="Chromosome XIII"/>
</dbReference>
<dbReference type="RNAct" id="P49957">
    <property type="molecule type" value="protein"/>
</dbReference>
<dbReference type="GO" id="GO:0005737">
    <property type="term" value="C:cytoplasm"/>
    <property type="evidence" value="ECO:0000314"/>
    <property type="project" value="SGD"/>
</dbReference>
<dbReference type="GO" id="GO:0005634">
    <property type="term" value="C:nucleus"/>
    <property type="evidence" value="ECO:0000314"/>
    <property type="project" value="SGD"/>
</dbReference>
<dbReference type="GO" id="GO:0043527">
    <property type="term" value="C:tRNA methyltransferase complex"/>
    <property type="evidence" value="ECO:0000353"/>
    <property type="project" value="ComplexPortal"/>
</dbReference>
<dbReference type="GO" id="GO:0008757">
    <property type="term" value="F:S-adenosylmethionine-dependent methyltransferase activity"/>
    <property type="evidence" value="ECO:0007669"/>
    <property type="project" value="InterPro"/>
</dbReference>
<dbReference type="GO" id="GO:0106335">
    <property type="term" value="F:tRNA (5-carboxymethyluridine(34)-5-O)-methyltransferase activity"/>
    <property type="evidence" value="ECO:0000318"/>
    <property type="project" value="GO_Central"/>
</dbReference>
<dbReference type="GO" id="GO:0016300">
    <property type="term" value="F:tRNA (uridine) methyltransferase activity"/>
    <property type="evidence" value="ECO:0000314"/>
    <property type="project" value="SGD"/>
</dbReference>
<dbReference type="GO" id="GO:0000049">
    <property type="term" value="F:tRNA binding"/>
    <property type="evidence" value="ECO:0000318"/>
    <property type="project" value="GO_Central"/>
</dbReference>
<dbReference type="GO" id="GO:0008175">
    <property type="term" value="F:tRNA methyltransferase activity"/>
    <property type="evidence" value="ECO:0000269"/>
    <property type="project" value="Reactome"/>
</dbReference>
<dbReference type="GO" id="GO:0006448">
    <property type="term" value="P:regulation of translational elongation"/>
    <property type="evidence" value="ECO:0000315"/>
    <property type="project" value="SGD"/>
</dbReference>
<dbReference type="GO" id="GO:0030488">
    <property type="term" value="P:tRNA methylation"/>
    <property type="evidence" value="ECO:0000314"/>
    <property type="project" value="SGD"/>
</dbReference>
<dbReference type="GO" id="GO:0006400">
    <property type="term" value="P:tRNA modification"/>
    <property type="evidence" value="ECO:0000304"/>
    <property type="project" value="Reactome"/>
</dbReference>
<dbReference type="GO" id="GO:0002098">
    <property type="term" value="P:tRNA wobble uridine modification"/>
    <property type="evidence" value="ECO:0000314"/>
    <property type="project" value="ComplexPortal"/>
</dbReference>
<dbReference type="CDD" id="cd02440">
    <property type="entry name" value="AdoMet_MTases"/>
    <property type="match status" value="1"/>
</dbReference>
<dbReference type="Gene3D" id="3.40.50.150">
    <property type="entry name" value="Vaccinia Virus protein VP39"/>
    <property type="match status" value="1"/>
</dbReference>
<dbReference type="InterPro" id="IPR051422">
    <property type="entry name" value="AlkB_tRNA_MeTrf/Diox"/>
</dbReference>
<dbReference type="InterPro" id="IPR013216">
    <property type="entry name" value="Methyltransf_11"/>
</dbReference>
<dbReference type="InterPro" id="IPR029063">
    <property type="entry name" value="SAM-dependent_MTases_sf"/>
</dbReference>
<dbReference type="PANTHER" id="PTHR13069">
    <property type="entry name" value="ALKYLATED DNA REPAIR PROTEIN ALKB HOMOLOG 8"/>
    <property type="match status" value="1"/>
</dbReference>
<dbReference type="PANTHER" id="PTHR13069:SF21">
    <property type="entry name" value="ALKYLATED DNA REPAIR PROTEIN ALKB HOMOLOG 8"/>
    <property type="match status" value="1"/>
</dbReference>
<dbReference type="Pfam" id="PF08241">
    <property type="entry name" value="Methyltransf_11"/>
    <property type="match status" value="1"/>
</dbReference>
<dbReference type="SUPFAM" id="SSF53335">
    <property type="entry name" value="S-adenosyl-L-methionine-dependent methyltransferases"/>
    <property type="match status" value="1"/>
</dbReference>
<reference key="1">
    <citation type="journal article" date="1997" name="Nature">
        <title>The nucleotide sequence of Saccharomyces cerevisiae chromosome XIII.</title>
        <authorList>
            <person name="Bowman S."/>
            <person name="Churcher C.M."/>
            <person name="Badcock K."/>
            <person name="Brown D."/>
            <person name="Chillingworth T."/>
            <person name="Connor R."/>
            <person name="Dedman K."/>
            <person name="Devlin K."/>
            <person name="Gentles S."/>
            <person name="Hamlin N."/>
            <person name="Hunt S."/>
            <person name="Jagels K."/>
            <person name="Lye G."/>
            <person name="Moule S."/>
            <person name="Odell C."/>
            <person name="Pearson D."/>
            <person name="Rajandream M.A."/>
            <person name="Rice P."/>
            <person name="Skelton J."/>
            <person name="Walsh S.V."/>
            <person name="Whitehead S."/>
            <person name="Barrell B.G."/>
        </authorList>
    </citation>
    <scope>NUCLEOTIDE SEQUENCE [LARGE SCALE GENOMIC DNA]</scope>
    <source>
        <strain>ATCC 204508 / S288c</strain>
    </source>
</reference>
<reference key="2">
    <citation type="journal article" date="2014" name="G3 (Bethesda)">
        <title>The reference genome sequence of Saccharomyces cerevisiae: Then and now.</title>
        <authorList>
            <person name="Engel S.R."/>
            <person name="Dietrich F.S."/>
            <person name="Fisk D.G."/>
            <person name="Binkley G."/>
            <person name="Balakrishnan R."/>
            <person name="Costanzo M.C."/>
            <person name="Dwight S.S."/>
            <person name="Hitz B.C."/>
            <person name="Karra K."/>
            <person name="Nash R.S."/>
            <person name="Weng S."/>
            <person name="Wong E.D."/>
            <person name="Lloyd P."/>
            <person name="Skrzypek M.S."/>
            <person name="Miyasato S.R."/>
            <person name="Simison M."/>
            <person name="Cherry J.M."/>
        </authorList>
    </citation>
    <scope>GENOME REANNOTATION</scope>
    <source>
        <strain>ATCC 204508 / S288c</strain>
    </source>
</reference>
<reference key="3">
    <citation type="journal article" date="2003" name="Mol. Cell. Biol.">
        <title>Novel methyltransferase for modified uridine residues at the wobble position of tRNA.</title>
        <authorList>
            <person name="Kalhor H.R."/>
            <person name="Clarke S."/>
        </authorList>
    </citation>
    <scope>FUNCTION</scope>
    <scope>CATALYTIC ACTIVITY</scope>
</reference>
<reference key="4">
    <citation type="journal article" date="2003" name="Nature">
        <title>Global analysis of protein localization in budding yeast.</title>
        <authorList>
            <person name="Huh W.-K."/>
            <person name="Falvo J.V."/>
            <person name="Gerke L.C."/>
            <person name="Carroll A.S."/>
            <person name="Howson R.W."/>
            <person name="Weissman J.S."/>
            <person name="O'Shea E.K."/>
        </authorList>
    </citation>
    <scope>SUBCELLULAR LOCATION [LARGE SCALE ANALYSIS]</scope>
</reference>
<reference key="5">
    <citation type="journal article" date="2003" name="Nature">
        <title>Global analysis of protein expression in yeast.</title>
        <authorList>
            <person name="Ghaemmaghami S."/>
            <person name="Huh W.-K."/>
            <person name="Bower K."/>
            <person name="Howson R.W."/>
            <person name="Belle A."/>
            <person name="Dephoure N."/>
            <person name="O'Shea E.K."/>
            <person name="Weissman J.S."/>
        </authorList>
    </citation>
    <scope>LEVEL OF PROTEIN EXPRESSION [LARGE SCALE ANALYSIS]</scope>
</reference>
<reference key="6">
    <citation type="journal article" date="2005" name="Mol. Cell. Biol.">
        <title>Trm11p and Trm112p are both required for the formation of 2-methylguanosine at position 10 in yeast tRNA.</title>
        <authorList>
            <person name="Purushothaman S.K."/>
            <person name="Bujnicki J.M."/>
            <person name="Grosjean H."/>
            <person name="Lapeyre B."/>
        </authorList>
    </citation>
    <scope>INTERACTION WITH TRM112</scope>
</reference>
<accession>P49957</accession>
<accession>D6VZG0</accession>
<protein>
    <recommendedName>
        <fullName>tRNA (carboxymethyluridine(34)-5-O)-methyltransferase</fullName>
        <ecNumber>2.1.1.229</ecNumber>
    </recommendedName>
    <alternativeName>
        <fullName>tRNA (uracil-5-)-methyltransferase TRM9</fullName>
    </alternativeName>
    <alternativeName>
        <fullName>tRNA [Um34] methyltransferase</fullName>
    </alternativeName>
    <alternativeName>
        <fullName>tRNA methylase 9</fullName>
    </alternativeName>
</protein>
<proteinExistence type="evidence at protein level"/>
<evidence type="ECO:0000256" key="1">
    <source>
        <dbReference type="SAM" id="MobiDB-lite"/>
    </source>
</evidence>
<evidence type="ECO:0000269" key="2">
    <source>
    </source>
</evidence>
<evidence type="ECO:0000269" key="3">
    <source>
    </source>
</evidence>
<evidence type="ECO:0000269" key="4">
    <source>
    </source>
</evidence>
<evidence type="ECO:0000269" key="5">
    <source>
    </source>
</evidence>
<feature type="chain" id="PRO_0000203262" description="tRNA (carboxymethyluridine(34)-5-O)-methyltransferase">
    <location>
        <begin position="1"/>
        <end position="279"/>
    </location>
</feature>
<feature type="region of interest" description="Disordered" evidence="1">
    <location>
        <begin position="172"/>
        <end position="236"/>
    </location>
</feature>
<feature type="compositionally biased region" description="Basic and acidic residues" evidence="1">
    <location>
        <begin position="200"/>
        <end position="229"/>
    </location>
</feature>
<keyword id="KW-0963">Cytoplasm</keyword>
<keyword id="KW-0489">Methyltransferase</keyword>
<keyword id="KW-0539">Nucleus</keyword>
<keyword id="KW-1185">Reference proteome</keyword>
<keyword id="KW-0949">S-adenosyl-L-methionine</keyword>
<keyword id="KW-0808">Transferase</keyword>
<comment type="function">
    <text evidence="4">Required for the methylation of the wobble bases at position 34 in tRNA. Appears to have a role in stress-response.</text>
</comment>
<comment type="catalytic activity">
    <reaction evidence="4">
        <text>5-(carboxymethyl)uridine(34) in tRNA + S-adenosyl-L-methionine = 5-(2-methoxy-2-oxoethyl)uridine(34) in tRNA + S-adenosyl-L-homocysteine</text>
        <dbReference type="Rhea" id="RHEA:43208"/>
        <dbReference type="Rhea" id="RHEA-COMP:10407"/>
        <dbReference type="Rhea" id="RHEA-COMP:10408"/>
        <dbReference type="ChEBI" id="CHEBI:57856"/>
        <dbReference type="ChEBI" id="CHEBI:59789"/>
        <dbReference type="ChEBI" id="CHEBI:74851"/>
        <dbReference type="ChEBI" id="CHEBI:74882"/>
        <dbReference type="EC" id="2.1.1.229"/>
    </reaction>
</comment>
<comment type="subunit">
    <text evidence="5">Interacts with TRM112.</text>
</comment>
<comment type="interaction">
    <interactant intactId="EBI-27735">
        <id>P49957</id>
    </interactant>
    <interactant intactId="EBI-28520">
        <id>P53738</id>
        <label>TRM112</label>
    </interactant>
    <organismsDiffer>false</organismsDiffer>
    <experiments>3</experiments>
</comment>
<comment type="subcellular location">
    <subcellularLocation>
        <location evidence="2">Cytoplasm</location>
    </subcellularLocation>
    <subcellularLocation>
        <location evidence="2">Nucleus</location>
    </subcellularLocation>
</comment>
<comment type="miscellaneous">
    <text evidence="3">Present with 2360 molecules/cell in log phase SD medium.</text>
</comment>
<sequence length="279" mass="32439">MEINQAAEKEQEYVHKVYNEIAPHFSQTRYKPWPIVTQFLKTRPMGSIGIDVGCGNGKYLGVNPDIYIIGSDRSDGLIECARGINPSYNLLVADGLNLPHKNETFDFAISIAVVHHWSTRERRVEVIRHVLSKLRQGGQALIYCWALEQGSSRRGYHEGMEQDVFVPWVLPKSKSKPKTKSTPPAKVKTRPKPNLMNIPPKERSEYLQRWKEEQQRSKSLDDNDEKQQQDQEQEREEVKYRYYHLYREGELAEDCRQAGAAVHSEGFERDNWWVVAQKR</sequence>
<gene>
    <name type="primary">TRM9</name>
    <name type="ordered locus">YML014W</name>
    <name type="ORF">YM9571.04</name>
</gene>
<name>TRM9_YEAST</name>